<feature type="initiator methionine" description="Removed" evidence="1">
    <location>
        <position position="1"/>
    </location>
</feature>
<feature type="chain" id="PRO_0000061979" description="Photosystem I iron-sulfur center">
    <location>
        <begin position="2"/>
        <end position="81"/>
    </location>
</feature>
<feature type="domain" description="4Fe-4S ferredoxin-type 1" evidence="2">
    <location>
        <begin position="2"/>
        <end position="31"/>
    </location>
</feature>
<feature type="domain" description="4Fe-4S ferredoxin-type 2" evidence="2">
    <location>
        <begin position="39"/>
        <end position="68"/>
    </location>
</feature>
<feature type="binding site" evidence="2">
    <location>
        <position position="11"/>
    </location>
    <ligand>
        <name>[4Fe-4S] cluster</name>
        <dbReference type="ChEBI" id="CHEBI:49883"/>
        <label>1</label>
    </ligand>
</feature>
<feature type="binding site" evidence="2">
    <location>
        <position position="14"/>
    </location>
    <ligand>
        <name>[4Fe-4S] cluster</name>
        <dbReference type="ChEBI" id="CHEBI:49883"/>
        <label>1</label>
    </ligand>
</feature>
<feature type="binding site" evidence="2">
    <location>
        <position position="17"/>
    </location>
    <ligand>
        <name>[4Fe-4S] cluster</name>
        <dbReference type="ChEBI" id="CHEBI:49883"/>
        <label>1</label>
    </ligand>
</feature>
<feature type="binding site" evidence="2">
    <location>
        <position position="21"/>
    </location>
    <ligand>
        <name>[4Fe-4S] cluster</name>
        <dbReference type="ChEBI" id="CHEBI:49883"/>
        <label>2</label>
    </ligand>
</feature>
<feature type="binding site" evidence="2">
    <location>
        <position position="48"/>
    </location>
    <ligand>
        <name>[4Fe-4S] cluster</name>
        <dbReference type="ChEBI" id="CHEBI:49883"/>
        <label>2</label>
    </ligand>
</feature>
<feature type="binding site" evidence="2">
    <location>
        <position position="51"/>
    </location>
    <ligand>
        <name>[4Fe-4S] cluster</name>
        <dbReference type="ChEBI" id="CHEBI:49883"/>
        <label>2</label>
    </ligand>
</feature>
<feature type="binding site" evidence="2">
    <location>
        <position position="54"/>
    </location>
    <ligand>
        <name>[4Fe-4S] cluster</name>
        <dbReference type="ChEBI" id="CHEBI:49883"/>
        <label>2</label>
    </ligand>
</feature>
<feature type="binding site" evidence="2">
    <location>
        <position position="58"/>
    </location>
    <ligand>
        <name>[4Fe-4S] cluster</name>
        <dbReference type="ChEBI" id="CHEBI:49883"/>
        <label>1</label>
    </ligand>
</feature>
<feature type="strand" evidence="3">
    <location>
        <begin position="4"/>
        <end position="7"/>
    </location>
</feature>
<feature type="turn" evidence="3">
    <location>
        <begin position="16"/>
        <end position="20"/>
    </location>
</feature>
<feature type="strand" evidence="3">
    <location>
        <begin position="27"/>
        <end position="30"/>
    </location>
</feature>
<feature type="turn" evidence="3">
    <location>
        <begin position="32"/>
        <end position="34"/>
    </location>
</feature>
<feature type="strand" evidence="3">
    <location>
        <begin position="35"/>
        <end position="41"/>
    </location>
</feature>
<feature type="helix" evidence="3">
    <location>
        <begin position="45"/>
        <end position="47"/>
    </location>
</feature>
<feature type="helix" evidence="3">
    <location>
        <begin position="55"/>
        <end position="57"/>
    </location>
</feature>
<feature type="strand" evidence="3">
    <location>
        <begin position="60"/>
        <end position="62"/>
    </location>
</feature>
<feature type="strand" evidence="3">
    <location>
        <begin position="64"/>
        <end position="68"/>
    </location>
</feature>
<feature type="turn" evidence="3">
    <location>
        <begin position="74"/>
        <end position="78"/>
    </location>
</feature>
<reference key="1">
    <citation type="journal article" date="1992" name="Gene">
        <title>The psaC genes of Synechococcus sp. PCC7002 and Cyanophora paradoxa: cloning and sequence analysis.</title>
        <authorList>
            <person name="Rhiel E."/>
            <person name="Stirewalt V.L."/>
            <person name="Gasparich G.E."/>
            <person name="Bryant D.A."/>
        </authorList>
    </citation>
    <scope>NUCLEOTIDE SEQUENCE [GENOMIC DNA]</scope>
</reference>
<reference key="2">
    <citation type="journal article" date="1995" name="Plant Mol. Biol. Rep.">
        <title>Nucleotide sequence of the cyanelle DNA from Cyanophora paradoxa.</title>
        <authorList>
            <person name="Stirewalt V.L."/>
            <person name="Michalowski C.B."/>
            <person name="Loeffelhardt W."/>
            <person name="Bohnert H.J."/>
            <person name="Bryant D.A."/>
        </authorList>
    </citation>
    <scope>NUCLEOTIDE SEQUENCE [LARGE SCALE GENOMIC DNA]</scope>
    <source>
        <strain>UTEX LB 555 / Pringsheim</strain>
    </source>
</reference>
<reference key="3">
    <citation type="book" date="1997" name="Eukaryotism and symbiosis">
        <title>The complete sequence of the cyanelle genome of Cyanophora paradoxa: the genetic complexity of a primitive plastid.</title>
        <editorList>
            <person name="Schenk H.E.A."/>
            <person name="Herrmann R."/>
            <person name="Jeon K.W."/>
            <person name="Mueller N.E."/>
            <person name="Schwemmler W."/>
        </editorList>
        <authorList>
            <person name="Loeffelhardt W."/>
            <person name="Stirewalt V.L."/>
            <person name="Michalowski C.B."/>
            <person name="Annarella M."/>
            <person name="Farley J.Y."/>
            <person name="Schluchter W.M."/>
            <person name="Chung S."/>
            <person name="Newmann-Spallart C."/>
            <person name="Steiner J.M."/>
            <person name="Jakowitsch J."/>
            <person name="Bohnert H.J."/>
            <person name="Bryant D.A."/>
        </authorList>
    </citation>
    <scope>NUCLEOTIDE SEQUENCE [LARGE SCALE GENOMIC DNA]</scope>
    <source>
        <strain>UTEX LB 555 / Pringsheim</strain>
    </source>
</reference>
<protein>
    <recommendedName>
        <fullName evidence="2">Photosystem I iron-sulfur center</fullName>
        <ecNumber evidence="2">1.97.1.12</ecNumber>
    </recommendedName>
    <alternativeName>
        <fullName evidence="2">9 kDa polypeptide</fullName>
    </alternativeName>
    <alternativeName>
        <fullName evidence="2">PSI-C</fullName>
    </alternativeName>
    <alternativeName>
        <fullName evidence="2">Photosystem I subunit VII</fullName>
    </alternativeName>
    <alternativeName>
        <fullName evidence="2">PsaC</fullName>
    </alternativeName>
</protein>
<comment type="function">
    <text>Apoprotein for the two 4Fe-4S centers FA and FB of photosystem I (PSI); essential for photochemical activity. FB is the terminal electron acceptor of PSI, donating electrons to ferredoxin. The C-terminus interacts with PsaA/B/D and helps assemble the protein into the PSI complex. Required for binding of PsaD and PsaE to PSI. PSI is a cytochrome c6-ferredoxin oxidoreductase, converting photonic excitation into a charge separation, which transfers an electron from the donor P700 chlorophyll pair to the spectroscopically characterized acceptors A0, A1, FX, FA and FB in turn.</text>
</comment>
<comment type="catalytic activity">
    <reaction evidence="2">
        <text>reduced [plastocyanin] + hnu + oxidized [2Fe-2S]-[ferredoxin] = oxidized [plastocyanin] + reduced [2Fe-2S]-[ferredoxin]</text>
        <dbReference type="Rhea" id="RHEA:30407"/>
        <dbReference type="Rhea" id="RHEA-COMP:10000"/>
        <dbReference type="Rhea" id="RHEA-COMP:10001"/>
        <dbReference type="Rhea" id="RHEA-COMP:10039"/>
        <dbReference type="Rhea" id="RHEA-COMP:10040"/>
        <dbReference type="ChEBI" id="CHEBI:29036"/>
        <dbReference type="ChEBI" id="CHEBI:30212"/>
        <dbReference type="ChEBI" id="CHEBI:33737"/>
        <dbReference type="ChEBI" id="CHEBI:33738"/>
        <dbReference type="ChEBI" id="CHEBI:49552"/>
        <dbReference type="EC" id="1.97.1.12"/>
    </reaction>
</comment>
<comment type="cofactor">
    <cofactor evidence="2">
        <name>[4Fe-4S] cluster</name>
        <dbReference type="ChEBI" id="CHEBI:49883"/>
    </cofactor>
    <text evidence="2">Binds 2 [4Fe-4S] clusters. Cluster 2 is most probably the spectroscopically characterized electron acceptor FA and cluster 1 is most probably FB.</text>
</comment>
<comment type="subunit">
    <text evidence="2">The eukaryotic PSI reaction center is composed of at least 11 subunits.</text>
</comment>
<comment type="subcellular location">
    <subcellularLocation>
        <location evidence="1">Plastid</location>
        <location evidence="1">Cyanelle thylakoid membrane</location>
        <topology evidence="2">Peripheral membrane protein</topology>
        <orientation evidence="2">Stromal side</orientation>
    </subcellularLocation>
</comment>
<sequence>MAHTVKIYDTCIGCTQCVRACPTDVLEMVPWDGCRANQIASAPRTEDCVGCKRCESACPTDFLSIRVYLGAETTRSMGLGY</sequence>
<organism>
    <name type="scientific">Cyanophora paradoxa</name>
    <dbReference type="NCBI Taxonomy" id="2762"/>
    <lineage>
        <taxon>Eukaryota</taxon>
        <taxon>Glaucocystophyceae</taxon>
        <taxon>Cyanophoraceae</taxon>
        <taxon>Cyanophora</taxon>
    </lineage>
</organism>
<evidence type="ECO:0000250" key="1"/>
<evidence type="ECO:0000255" key="2">
    <source>
        <dbReference type="HAMAP-Rule" id="MF_01303"/>
    </source>
</evidence>
<evidence type="ECO:0007829" key="3">
    <source>
        <dbReference type="PDB" id="7DR1"/>
    </source>
</evidence>
<geneLocation type="cyanelle"/>
<keyword id="KW-0002">3D-structure</keyword>
<keyword id="KW-0004">4Fe-4S</keyword>
<keyword id="KW-0194">Cyanelle</keyword>
<keyword id="KW-0249">Electron transport</keyword>
<keyword id="KW-0408">Iron</keyword>
<keyword id="KW-0411">Iron-sulfur</keyword>
<keyword id="KW-0472">Membrane</keyword>
<keyword id="KW-0479">Metal-binding</keyword>
<keyword id="KW-0560">Oxidoreductase</keyword>
<keyword id="KW-0602">Photosynthesis</keyword>
<keyword id="KW-0603">Photosystem I</keyword>
<keyword id="KW-0934">Plastid</keyword>
<keyword id="KW-0677">Repeat</keyword>
<keyword id="KW-0793">Thylakoid</keyword>
<keyword id="KW-0813">Transport</keyword>
<proteinExistence type="evidence at protein level"/>
<gene>
    <name evidence="2" type="primary">psaC</name>
</gene>
<dbReference type="EC" id="1.97.1.12" evidence="2"/>
<dbReference type="EMBL" id="M86239">
    <property type="protein sequence ID" value="AAA65469.1"/>
    <property type="molecule type" value="Genomic_DNA"/>
</dbReference>
<dbReference type="EMBL" id="U30821">
    <property type="protein sequence ID" value="AAA81301.1"/>
    <property type="molecule type" value="Genomic_DNA"/>
</dbReference>
<dbReference type="PIR" id="JS0697">
    <property type="entry name" value="JS0697"/>
</dbReference>
<dbReference type="RefSeq" id="NP_043270.1">
    <property type="nucleotide sequence ID" value="NC_001675.1"/>
</dbReference>
<dbReference type="PDB" id="7DR0">
    <property type="method" value="EM"/>
    <property type="resolution" value="3.30 A"/>
    <property type="chains" value="C=1-81"/>
</dbReference>
<dbReference type="PDB" id="7DR1">
    <property type="method" value="EM"/>
    <property type="resolution" value="3.20 A"/>
    <property type="chains" value="C=1-81"/>
</dbReference>
<dbReference type="PDB" id="7DR2">
    <property type="method" value="EM"/>
    <property type="resolution" value="3.80 A"/>
    <property type="chains" value="aC/bC/cC/dC=1-81"/>
</dbReference>
<dbReference type="PDBsum" id="7DR0"/>
<dbReference type="PDBsum" id="7DR1"/>
<dbReference type="PDBsum" id="7DR2"/>
<dbReference type="EMDB" id="EMD-30820"/>
<dbReference type="EMDB" id="EMD-30821"/>
<dbReference type="EMDB" id="EMD-30823"/>
<dbReference type="SMR" id="P31173"/>
<dbReference type="GeneID" id="801630"/>
<dbReference type="GO" id="GO:0033115">
    <property type="term" value="C:cyanelle thylakoid membrane"/>
    <property type="evidence" value="ECO:0007669"/>
    <property type="project" value="UniProtKB-SubCell"/>
</dbReference>
<dbReference type="GO" id="GO:0009522">
    <property type="term" value="C:photosystem I"/>
    <property type="evidence" value="ECO:0007669"/>
    <property type="project" value="UniProtKB-KW"/>
</dbReference>
<dbReference type="GO" id="GO:0051539">
    <property type="term" value="F:4 iron, 4 sulfur cluster binding"/>
    <property type="evidence" value="ECO:0007669"/>
    <property type="project" value="UniProtKB-KW"/>
</dbReference>
<dbReference type="GO" id="GO:0009055">
    <property type="term" value="F:electron transfer activity"/>
    <property type="evidence" value="ECO:0007669"/>
    <property type="project" value="UniProtKB-UniRule"/>
</dbReference>
<dbReference type="GO" id="GO:0046872">
    <property type="term" value="F:metal ion binding"/>
    <property type="evidence" value="ECO:0007669"/>
    <property type="project" value="UniProtKB-KW"/>
</dbReference>
<dbReference type="GO" id="GO:0016491">
    <property type="term" value="F:oxidoreductase activity"/>
    <property type="evidence" value="ECO:0007669"/>
    <property type="project" value="UniProtKB-KW"/>
</dbReference>
<dbReference type="GO" id="GO:0009773">
    <property type="term" value="P:photosynthetic electron transport in photosystem I"/>
    <property type="evidence" value="ECO:0007669"/>
    <property type="project" value="InterPro"/>
</dbReference>
<dbReference type="FunFam" id="3.30.70.20:FF:000001">
    <property type="entry name" value="Photosystem I iron-sulfur center"/>
    <property type="match status" value="1"/>
</dbReference>
<dbReference type="Gene3D" id="3.30.70.20">
    <property type="match status" value="1"/>
</dbReference>
<dbReference type="HAMAP" id="MF_01303">
    <property type="entry name" value="PSI_PsaC"/>
    <property type="match status" value="1"/>
</dbReference>
<dbReference type="InterPro" id="IPR017896">
    <property type="entry name" value="4Fe4S_Fe-S-bd"/>
</dbReference>
<dbReference type="InterPro" id="IPR017900">
    <property type="entry name" value="4Fe4S_Fe_S_CS"/>
</dbReference>
<dbReference type="InterPro" id="IPR050157">
    <property type="entry name" value="PSI_iron-sulfur_center"/>
</dbReference>
<dbReference type="InterPro" id="IPR017491">
    <property type="entry name" value="PSI_PsaC"/>
</dbReference>
<dbReference type="NCBIfam" id="TIGR03048">
    <property type="entry name" value="PS_I_psaC"/>
    <property type="match status" value="1"/>
</dbReference>
<dbReference type="PANTHER" id="PTHR24960:SF79">
    <property type="entry name" value="PHOTOSYSTEM I IRON-SULFUR CENTER"/>
    <property type="match status" value="1"/>
</dbReference>
<dbReference type="PANTHER" id="PTHR24960">
    <property type="entry name" value="PHOTOSYSTEM I IRON-SULFUR CENTER-RELATED"/>
    <property type="match status" value="1"/>
</dbReference>
<dbReference type="Pfam" id="PF12838">
    <property type="entry name" value="Fer4_7"/>
    <property type="match status" value="1"/>
</dbReference>
<dbReference type="SUPFAM" id="SSF54862">
    <property type="entry name" value="4Fe-4S ferredoxins"/>
    <property type="match status" value="1"/>
</dbReference>
<dbReference type="PROSITE" id="PS00198">
    <property type="entry name" value="4FE4S_FER_1"/>
    <property type="match status" value="2"/>
</dbReference>
<dbReference type="PROSITE" id="PS51379">
    <property type="entry name" value="4FE4S_FER_2"/>
    <property type="match status" value="2"/>
</dbReference>
<name>PSAC_CYAPA</name>
<accession>P31173</accession>